<evidence type="ECO:0000255" key="1">
    <source>
        <dbReference type="HAMAP-Rule" id="MF_01014"/>
    </source>
</evidence>
<protein>
    <recommendedName>
        <fullName evidence="1">1-(5-phosphoribosyl)-5-[(5-phosphoribosylamino)methylideneamino] imidazole-4-carboxamide isomerase</fullName>
        <ecNumber evidence="1">5.3.1.16</ecNumber>
    </recommendedName>
    <alternativeName>
        <fullName evidence="1">Phosphoribosylformimino-5-aminoimidazole carboxamide ribotide isomerase</fullName>
    </alternativeName>
</protein>
<reference key="1">
    <citation type="submission" date="2007-05" db="EMBL/GenBank/DDBJ databases">
        <title>Complete sequence of Thermotoga petrophila RKU-1.</title>
        <authorList>
            <consortium name="US DOE Joint Genome Institute"/>
            <person name="Copeland A."/>
            <person name="Lucas S."/>
            <person name="Lapidus A."/>
            <person name="Barry K."/>
            <person name="Glavina del Rio T."/>
            <person name="Dalin E."/>
            <person name="Tice H."/>
            <person name="Pitluck S."/>
            <person name="Sims D."/>
            <person name="Brettin T."/>
            <person name="Bruce D."/>
            <person name="Detter J.C."/>
            <person name="Han C."/>
            <person name="Tapia R."/>
            <person name="Schmutz J."/>
            <person name="Larimer F."/>
            <person name="Land M."/>
            <person name="Hauser L."/>
            <person name="Kyrpides N."/>
            <person name="Mikhailova N."/>
            <person name="Nelson K."/>
            <person name="Gogarten J.P."/>
            <person name="Noll K."/>
            <person name="Richardson P."/>
        </authorList>
    </citation>
    <scope>NUCLEOTIDE SEQUENCE [LARGE SCALE GENOMIC DNA]</scope>
    <source>
        <strain>ATCC BAA-488 / DSM 13995 / JCM 10881 / RKU-1</strain>
    </source>
</reference>
<comment type="catalytic activity">
    <reaction evidence="1">
        <text>1-(5-phospho-beta-D-ribosyl)-5-[(5-phospho-beta-D-ribosylamino)methylideneamino]imidazole-4-carboxamide = 5-[(5-phospho-1-deoxy-D-ribulos-1-ylimino)methylamino]-1-(5-phospho-beta-D-ribosyl)imidazole-4-carboxamide</text>
        <dbReference type="Rhea" id="RHEA:15469"/>
        <dbReference type="ChEBI" id="CHEBI:58435"/>
        <dbReference type="ChEBI" id="CHEBI:58525"/>
        <dbReference type="EC" id="5.3.1.16"/>
    </reaction>
</comment>
<comment type="pathway">
    <text evidence="1">Amino-acid biosynthesis; L-histidine biosynthesis; L-histidine from 5-phospho-alpha-D-ribose 1-diphosphate: step 4/9.</text>
</comment>
<comment type="subcellular location">
    <subcellularLocation>
        <location evidence="1">Cytoplasm</location>
    </subcellularLocation>
</comment>
<comment type="similarity">
    <text evidence="1">Belongs to the HisA/HisF family.</text>
</comment>
<sequence>MLVVPAIDLFRGKVARMVKGKKENTIFYEKDPAELVKKLIEEGFTLIHVVDLSKAIENSVENFPVLERLSEFAEHIQIGGGIRSFDYAERLRKLGYKRQIVSSKVLEDPSFLKFLKEIDVEPVFSLDTRGGKVAFKGWLAEEEIDPISLLKRLKEYGLEEIVHTEIEKDGTLQEHDFSLTRKIAIEAEVNVFAAGGISSENSLKTAQRVHRETNGLLKGVIVGRAFLEGILTVEVMKRYAR</sequence>
<proteinExistence type="inferred from homology"/>
<dbReference type="EC" id="5.3.1.16" evidence="1"/>
<dbReference type="EMBL" id="CP000702">
    <property type="protein sequence ID" value="ABQ47718.1"/>
    <property type="molecule type" value="Genomic_DNA"/>
</dbReference>
<dbReference type="RefSeq" id="WP_011944124.1">
    <property type="nucleotide sequence ID" value="NC_009486.1"/>
</dbReference>
<dbReference type="SMR" id="A5INE5"/>
<dbReference type="STRING" id="390874.Tpet_1713"/>
<dbReference type="KEGG" id="tpt:Tpet_1713"/>
<dbReference type="eggNOG" id="COG0106">
    <property type="taxonomic scope" value="Bacteria"/>
</dbReference>
<dbReference type="HOGENOM" id="CLU_048577_1_2_0"/>
<dbReference type="UniPathway" id="UPA00031">
    <property type="reaction ID" value="UER00009"/>
</dbReference>
<dbReference type="Proteomes" id="UP000006558">
    <property type="component" value="Chromosome"/>
</dbReference>
<dbReference type="GO" id="GO:0005737">
    <property type="term" value="C:cytoplasm"/>
    <property type="evidence" value="ECO:0007669"/>
    <property type="project" value="UniProtKB-SubCell"/>
</dbReference>
<dbReference type="GO" id="GO:0003949">
    <property type="term" value="F:1-(5-phosphoribosyl)-5-[(5-phosphoribosylamino)methylideneamino]imidazole-4-carboxamide isomerase activity"/>
    <property type="evidence" value="ECO:0007669"/>
    <property type="project" value="UniProtKB-UniRule"/>
</dbReference>
<dbReference type="GO" id="GO:0000105">
    <property type="term" value="P:L-histidine biosynthetic process"/>
    <property type="evidence" value="ECO:0007669"/>
    <property type="project" value="UniProtKB-UniRule"/>
</dbReference>
<dbReference type="GO" id="GO:0000162">
    <property type="term" value="P:L-tryptophan biosynthetic process"/>
    <property type="evidence" value="ECO:0007669"/>
    <property type="project" value="TreeGrafter"/>
</dbReference>
<dbReference type="CDD" id="cd04732">
    <property type="entry name" value="HisA"/>
    <property type="match status" value="1"/>
</dbReference>
<dbReference type="Gene3D" id="3.20.20.70">
    <property type="entry name" value="Aldolase class I"/>
    <property type="match status" value="1"/>
</dbReference>
<dbReference type="HAMAP" id="MF_01014">
    <property type="entry name" value="HisA"/>
    <property type="match status" value="1"/>
</dbReference>
<dbReference type="InterPro" id="IPR013785">
    <property type="entry name" value="Aldolase_TIM"/>
</dbReference>
<dbReference type="InterPro" id="IPR006062">
    <property type="entry name" value="His_biosynth"/>
</dbReference>
<dbReference type="InterPro" id="IPR006063">
    <property type="entry name" value="HisA_bact_arch"/>
</dbReference>
<dbReference type="InterPro" id="IPR044524">
    <property type="entry name" value="Isoase_HisA-like"/>
</dbReference>
<dbReference type="InterPro" id="IPR023016">
    <property type="entry name" value="Isoase_HisA-like_bact"/>
</dbReference>
<dbReference type="InterPro" id="IPR011060">
    <property type="entry name" value="RibuloseP-bd_barrel"/>
</dbReference>
<dbReference type="NCBIfam" id="TIGR00007">
    <property type="entry name" value="1-(5-phosphoribosyl)-5-[(5-phosphoribosylamino)methylideneamino]imidazole-4-carboxamide isomerase"/>
    <property type="match status" value="1"/>
</dbReference>
<dbReference type="NCBIfam" id="NF010712">
    <property type="entry name" value="PRK14114.1"/>
    <property type="match status" value="1"/>
</dbReference>
<dbReference type="PANTHER" id="PTHR43090">
    <property type="entry name" value="1-(5-PHOSPHORIBOSYL)-5-[(5-PHOSPHORIBOSYLAMINO)METHYLIDENEAMINO] IMIDAZOLE-4-CARBOXAMIDE ISOMERASE"/>
    <property type="match status" value="1"/>
</dbReference>
<dbReference type="PANTHER" id="PTHR43090:SF2">
    <property type="entry name" value="1-(5-PHOSPHORIBOSYL)-5-[(5-PHOSPHORIBOSYLAMINO)METHYLIDENEAMINO] IMIDAZOLE-4-CARBOXAMIDE ISOMERASE"/>
    <property type="match status" value="1"/>
</dbReference>
<dbReference type="Pfam" id="PF00977">
    <property type="entry name" value="His_biosynth"/>
    <property type="match status" value="1"/>
</dbReference>
<dbReference type="SUPFAM" id="SSF51366">
    <property type="entry name" value="Ribulose-phoshate binding barrel"/>
    <property type="match status" value="1"/>
</dbReference>
<accession>A5INE5</accession>
<organism>
    <name type="scientific">Thermotoga petrophila (strain ATCC BAA-488 / DSM 13995 / JCM 10881 / RKU-1)</name>
    <dbReference type="NCBI Taxonomy" id="390874"/>
    <lineage>
        <taxon>Bacteria</taxon>
        <taxon>Thermotogati</taxon>
        <taxon>Thermotogota</taxon>
        <taxon>Thermotogae</taxon>
        <taxon>Thermotogales</taxon>
        <taxon>Thermotogaceae</taxon>
        <taxon>Thermotoga</taxon>
    </lineage>
</organism>
<keyword id="KW-0028">Amino-acid biosynthesis</keyword>
<keyword id="KW-0963">Cytoplasm</keyword>
<keyword id="KW-0368">Histidine biosynthesis</keyword>
<keyword id="KW-0413">Isomerase</keyword>
<feature type="chain" id="PRO_1000063240" description="1-(5-phosphoribosyl)-5-[(5-phosphoribosylamino)methylideneamino] imidazole-4-carboxamide isomerase">
    <location>
        <begin position="1"/>
        <end position="241"/>
    </location>
</feature>
<feature type="active site" description="Proton acceptor" evidence="1">
    <location>
        <position position="8"/>
    </location>
</feature>
<feature type="active site" description="Proton donor" evidence="1">
    <location>
        <position position="127"/>
    </location>
</feature>
<name>HIS4_THEP1</name>
<gene>
    <name evidence="1" type="primary">hisA</name>
    <name type="ordered locus">Tpet_1713</name>
</gene>